<feature type="chain" id="PRO_0000287088" description="Protein DDI1 homolog 1">
    <location>
        <begin position="1"/>
        <end position="408"/>
    </location>
</feature>
<feature type="domain" description="Ubiquitin-like" evidence="3">
    <location>
        <begin position="1"/>
        <end position="81"/>
    </location>
</feature>
<feature type="region of interest" description="Disordered" evidence="4">
    <location>
        <begin position="82"/>
        <end position="135"/>
    </location>
</feature>
<feature type="region of interest" description="Disordered" evidence="4">
    <location>
        <begin position="386"/>
        <end position="408"/>
    </location>
</feature>
<feature type="compositionally biased region" description="Polar residues" evidence="4">
    <location>
        <begin position="98"/>
        <end position="109"/>
    </location>
</feature>
<feature type="compositionally biased region" description="Basic residues" evidence="4">
    <location>
        <begin position="110"/>
        <end position="124"/>
    </location>
</feature>
<feature type="compositionally biased region" description="Basic residues" evidence="4">
    <location>
        <begin position="398"/>
        <end position="408"/>
    </location>
</feature>
<feature type="active site" evidence="5">
    <location>
        <position position="266"/>
    </location>
</feature>
<feature type="strand" evidence="6">
    <location>
        <begin position="1"/>
        <end position="7"/>
    </location>
</feature>
<feature type="turn" evidence="6">
    <location>
        <begin position="9"/>
        <end position="12"/>
    </location>
</feature>
<feature type="strand" evidence="6">
    <location>
        <begin position="16"/>
        <end position="21"/>
    </location>
</feature>
<feature type="helix" evidence="6">
    <location>
        <begin position="27"/>
        <end position="37"/>
    </location>
</feature>
<feature type="helix" evidence="6">
    <location>
        <begin position="42"/>
        <end position="44"/>
    </location>
</feature>
<feature type="strand" evidence="6">
    <location>
        <begin position="47"/>
        <end position="49"/>
    </location>
</feature>
<feature type="strand" evidence="6">
    <location>
        <begin position="52"/>
        <end position="54"/>
    </location>
</feature>
<feature type="strand" evidence="6">
    <location>
        <begin position="57"/>
        <end position="60"/>
    </location>
</feature>
<feature type="helix" evidence="6">
    <location>
        <begin position="61"/>
        <end position="64"/>
    </location>
</feature>
<feature type="strand" evidence="6">
    <location>
        <begin position="70"/>
        <end position="74"/>
    </location>
</feature>
<name>DDI1_MOUSE</name>
<dbReference type="EC" id="3.4.23.-" evidence="1"/>
<dbReference type="EMBL" id="AK005882">
    <property type="protein sequence ID" value="BAB24297.1"/>
    <property type="molecule type" value="mRNA"/>
</dbReference>
<dbReference type="CCDS" id="CCDS40527.1"/>
<dbReference type="RefSeq" id="NP_082218.1">
    <property type="nucleotide sequence ID" value="NM_027942.1"/>
</dbReference>
<dbReference type="PDB" id="1V5O">
    <property type="method" value="NMR"/>
    <property type="chains" value="A=1-89"/>
</dbReference>
<dbReference type="PDBsum" id="1V5O"/>
<dbReference type="SMR" id="Q9DAF3"/>
<dbReference type="FunCoup" id="Q9DAF3">
    <property type="interactions" value="71"/>
</dbReference>
<dbReference type="STRING" id="10090.ENSMUSP00000053223"/>
<dbReference type="MEROPS" id="A28.A01"/>
<dbReference type="iPTMnet" id="Q9DAF3"/>
<dbReference type="PhosphoSitePlus" id="Q9DAF3"/>
<dbReference type="SwissPalm" id="Q9DAF3"/>
<dbReference type="jPOST" id="Q9DAF3"/>
<dbReference type="PaxDb" id="10090-ENSMUSP00000053223"/>
<dbReference type="PeptideAtlas" id="Q9DAF3"/>
<dbReference type="ProteomicsDB" id="279846"/>
<dbReference type="Antibodypedia" id="31840">
    <property type="antibodies" value="62 antibodies from 22 providers"/>
</dbReference>
<dbReference type="Ensembl" id="ENSMUST00000051706.6">
    <property type="protein sequence ID" value="ENSMUSP00000053223.5"/>
    <property type="gene ID" value="ENSMUSG00000047619.6"/>
</dbReference>
<dbReference type="GeneID" id="71829"/>
<dbReference type="KEGG" id="mmu:71829"/>
<dbReference type="UCSC" id="uc009oca.1">
    <property type="organism name" value="mouse"/>
</dbReference>
<dbReference type="AGR" id="MGI:1919079"/>
<dbReference type="CTD" id="414301"/>
<dbReference type="MGI" id="MGI:1919079">
    <property type="gene designation" value="Ddi1"/>
</dbReference>
<dbReference type="VEuPathDB" id="HostDB:ENSMUSG00000047619"/>
<dbReference type="eggNOG" id="KOG0012">
    <property type="taxonomic scope" value="Eukaryota"/>
</dbReference>
<dbReference type="GeneTree" id="ENSGT00950000182999"/>
<dbReference type="HOGENOM" id="CLU_020435_1_0_1"/>
<dbReference type="InParanoid" id="Q9DAF3"/>
<dbReference type="OMA" id="LYTADPF"/>
<dbReference type="OrthoDB" id="1047367at2759"/>
<dbReference type="PhylomeDB" id="Q9DAF3"/>
<dbReference type="TreeFam" id="TF333421"/>
<dbReference type="BioGRID-ORCS" id="71829">
    <property type="hits" value="2 hits in 77 CRISPR screens"/>
</dbReference>
<dbReference type="EvolutionaryTrace" id="Q9DAF3"/>
<dbReference type="PRO" id="PR:Q9DAF3"/>
<dbReference type="Proteomes" id="UP000000589">
    <property type="component" value="Chromosome 9"/>
</dbReference>
<dbReference type="RNAct" id="Q9DAF3">
    <property type="molecule type" value="protein"/>
</dbReference>
<dbReference type="Bgee" id="ENSMUSG00000047619">
    <property type="expression patterns" value="Expressed in seminiferous tubule of testis and 17 other cell types or tissues"/>
</dbReference>
<dbReference type="GO" id="GO:0004190">
    <property type="term" value="F:aspartic-type endopeptidase activity"/>
    <property type="evidence" value="ECO:0007669"/>
    <property type="project" value="UniProtKB-KW"/>
</dbReference>
<dbReference type="GO" id="GO:0072711">
    <property type="term" value="P:cellular response to hydroxyurea"/>
    <property type="evidence" value="ECO:0000250"/>
    <property type="project" value="UniProtKB"/>
</dbReference>
<dbReference type="GO" id="GO:0010498">
    <property type="term" value="P:proteasomal protein catabolic process"/>
    <property type="evidence" value="ECO:0000250"/>
    <property type="project" value="UniProtKB"/>
</dbReference>
<dbReference type="GO" id="GO:0097752">
    <property type="term" value="P:regulation of DNA stability"/>
    <property type="evidence" value="ECO:0000250"/>
    <property type="project" value="UniProtKB"/>
</dbReference>
<dbReference type="GO" id="GO:0031647">
    <property type="term" value="P:regulation of protein stability"/>
    <property type="evidence" value="ECO:0000250"/>
    <property type="project" value="UniProtKB"/>
</dbReference>
<dbReference type="CDD" id="cd05479">
    <property type="entry name" value="RP_DDI"/>
    <property type="match status" value="1"/>
</dbReference>
<dbReference type="CDD" id="cd01796">
    <property type="entry name" value="Ubl_Ddi1_like"/>
    <property type="match status" value="1"/>
</dbReference>
<dbReference type="FunFam" id="2.40.70.10:FF:000005">
    <property type="entry name" value="DNA damage inducible 1 homolog 2"/>
    <property type="match status" value="1"/>
</dbReference>
<dbReference type="FunFam" id="3.10.20.90:FF:000107">
    <property type="entry name" value="protein DDI1 homolog 2 isoform X1"/>
    <property type="match status" value="1"/>
</dbReference>
<dbReference type="Gene3D" id="2.40.70.10">
    <property type="entry name" value="Acid Proteases"/>
    <property type="match status" value="1"/>
</dbReference>
<dbReference type="Gene3D" id="3.10.20.90">
    <property type="entry name" value="Phosphatidylinositol 3-kinase Catalytic Subunit, Chain A, domain 1"/>
    <property type="match status" value="1"/>
</dbReference>
<dbReference type="InterPro" id="IPR033882">
    <property type="entry name" value="DDI1_N"/>
</dbReference>
<dbReference type="InterPro" id="IPR019103">
    <property type="entry name" value="Peptidase_aspartic_DDI1-type"/>
</dbReference>
<dbReference type="InterPro" id="IPR021109">
    <property type="entry name" value="Peptidase_aspartic_dom_sf"/>
</dbReference>
<dbReference type="InterPro" id="IPR000626">
    <property type="entry name" value="Ubiquitin-like_dom"/>
</dbReference>
<dbReference type="InterPro" id="IPR029071">
    <property type="entry name" value="Ubiquitin-like_domsf"/>
</dbReference>
<dbReference type="PANTHER" id="PTHR15397:SF3">
    <property type="entry name" value="DNA DAMAGE INDUCIBLE 1 HOMOLOG 2"/>
    <property type="match status" value="1"/>
</dbReference>
<dbReference type="PANTHER" id="PTHR15397">
    <property type="entry name" value="SODIUM-GLUCOSE COTRANSPORTER REGULATORY PROTEIN -RELATED"/>
    <property type="match status" value="1"/>
</dbReference>
<dbReference type="Pfam" id="PF09668">
    <property type="entry name" value="Asp_protease"/>
    <property type="match status" value="1"/>
</dbReference>
<dbReference type="Pfam" id="PF24669">
    <property type="entry name" value="Ddi2_HDD"/>
    <property type="match status" value="1"/>
</dbReference>
<dbReference type="Pfam" id="PF00240">
    <property type="entry name" value="ubiquitin"/>
    <property type="match status" value="1"/>
</dbReference>
<dbReference type="SUPFAM" id="SSF50630">
    <property type="entry name" value="Acid proteases"/>
    <property type="match status" value="1"/>
</dbReference>
<dbReference type="SUPFAM" id="SSF54236">
    <property type="entry name" value="Ubiquitin-like"/>
    <property type="match status" value="1"/>
</dbReference>
<dbReference type="PROSITE" id="PS50053">
    <property type="entry name" value="UBIQUITIN_2"/>
    <property type="match status" value="1"/>
</dbReference>
<reference key="1">
    <citation type="journal article" date="2005" name="Science">
        <title>The transcriptional landscape of the mammalian genome.</title>
        <authorList>
            <person name="Carninci P."/>
            <person name="Kasukawa T."/>
            <person name="Katayama S."/>
            <person name="Gough J."/>
            <person name="Frith M.C."/>
            <person name="Maeda N."/>
            <person name="Oyama R."/>
            <person name="Ravasi T."/>
            <person name="Lenhard B."/>
            <person name="Wells C."/>
            <person name="Kodzius R."/>
            <person name="Shimokawa K."/>
            <person name="Bajic V.B."/>
            <person name="Brenner S.E."/>
            <person name="Batalov S."/>
            <person name="Forrest A.R."/>
            <person name="Zavolan M."/>
            <person name="Davis M.J."/>
            <person name="Wilming L.G."/>
            <person name="Aidinis V."/>
            <person name="Allen J.E."/>
            <person name="Ambesi-Impiombato A."/>
            <person name="Apweiler R."/>
            <person name="Aturaliya R.N."/>
            <person name="Bailey T.L."/>
            <person name="Bansal M."/>
            <person name="Baxter L."/>
            <person name="Beisel K.W."/>
            <person name="Bersano T."/>
            <person name="Bono H."/>
            <person name="Chalk A.M."/>
            <person name="Chiu K.P."/>
            <person name="Choudhary V."/>
            <person name="Christoffels A."/>
            <person name="Clutterbuck D.R."/>
            <person name="Crowe M.L."/>
            <person name="Dalla E."/>
            <person name="Dalrymple B.P."/>
            <person name="de Bono B."/>
            <person name="Della Gatta G."/>
            <person name="di Bernardo D."/>
            <person name="Down T."/>
            <person name="Engstrom P."/>
            <person name="Fagiolini M."/>
            <person name="Faulkner G."/>
            <person name="Fletcher C.F."/>
            <person name="Fukushima T."/>
            <person name="Furuno M."/>
            <person name="Futaki S."/>
            <person name="Gariboldi M."/>
            <person name="Georgii-Hemming P."/>
            <person name="Gingeras T.R."/>
            <person name="Gojobori T."/>
            <person name="Green R.E."/>
            <person name="Gustincich S."/>
            <person name="Harbers M."/>
            <person name="Hayashi Y."/>
            <person name="Hensch T.K."/>
            <person name="Hirokawa N."/>
            <person name="Hill D."/>
            <person name="Huminiecki L."/>
            <person name="Iacono M."/>
            <person name="Ikeo K."/>
            <person name="Iwama A."/>
            <person name="Ishikawa T."/>
            <person name="Jakt M."/>
            <person name="Kanapin A."/>
            <person name="Katoh M."/>
            <person name="Kawasawa Y."/>
            <person name="Kelso J."/>
            <person name="Kitamura H."/>
            <person name="Kitano H."/>
            <person name="Kollias G."/>
            <person name="Krishnan S.P."/>
            <person name="Kruger A."/>
            <person name="Kummerfeld S.K."/>
            <person name="Kurochkin I.V."/>
            <person name="Lareau L.F."/>
            <person name="Lazarevic D."/>
            <person name="Lipovich L."/>
            <person name="Liu J."/>
            <person name="Liuni S."/>
            <person name="McWilliam S."/>
            <person name="Madan Babu M."/>
            <person name="Madera M."/>
            <person name="Marchionni L."/>
            <person name="Matsuda H."/>
            <person name="Matsuzawa S."/>
            <person name="Miki H."/>
            <person name="Mignone F."/>
            <person name="Miyake S."/>
            <person name="Morris K."/>
            <person name="Mottagui-Tabar S."/>
            <person name="Mulder N."/>
            <person name="Nakano N."/>
            <person name="Nakauchi H."/>
            <person name="Ng P."/>
            <person name="Nilsson R."/>
            <person name="Nishiguchi S."/>
            <person name="Nishikawa S."/>
            <person name="Nori F."/>
            <person name="Ohara O."/>
            <person name="Okazaki Y."/>
            <person name="Orlando V."/>
            <person name="Pang K.C."/>
            <person name="Pavan W.J."/>
            <person name="Pavesi G."/>
            <person name="Pesole G."/>
            <person name="Petrovsky N."/>
            <person name="Piazza S."/>
            <person name="Reed J."/>
            <person name="Reid J.F."/>
            <person name="Ring B.Z."/>
            <person name="Ringwald M."/>
            <person name="Rost B."/>
            <person name="Ruan Y."/>
            <person name="Salzberg S.L."/>
            <person name="Sandelin A."/>
            <person name="Schneider C."/>
            <person name="Schoenbach C."/>
            <person name="Sekiguchi K."/>
            <person name="Semple C.A."/>
            <person name="Seno S."/>
            <person name="Sessa L."/>
            <person name="Sheng Y."/>
            <person name="Shibata Y."/>
            <person name="Shimada H."/>
            <person name="Shimada K."/>
            <person name="Silva D."/>
            <person name="Sinclair B."/>
            <person name="Sperling S."/>
            <person name="Stupka E."/>
            <person name="Sugiura K."/>
            <person name="Sultana R."/>
            <person name="Takenaka Y."/>
            <person name="Taki K."/>
            <person name="Tammoja K."/>
            <person name="Tan S.L."/>
            <person name="Tang S."/>
            <person name="Taylor M.S."/>
            <person name="Tegner J."/>
            <person name="Teichmann S.A."/>
            <person name="Ueda H.R."/>
            <person name="van Nimwegen E."/>
            <person name="Verardo R."/>
            <person name="Wei C.L."/>
            <person name="Yagi K."/>
            <person name="Yamanishi H."/>
            <person name="Zabarovsky E."/>
            <person name="Zhu S."/>
            <person name="Zimmer A."/>
            <person name="Hide W."/>
            <person name="Bult C."/>
            <person name="Grimmond S.M."/>
            <person name="Teasdale R.D."/>
            <person name="Liu E.T."/>
            <person name="Brusic V."/>
            <person name="Quackenbush J."/>
            <person name="Wahlestedt C."/>
            <person name="Mattick J.S."/>
            <person name="Hume D.A."/>
            <person name="Kai C."/>
            <person name="Sasaki D."/>
            <person name="Tomaru Y."/>
            <person name="Fukuda S."/>
            <person name="Kanamori-Katayama M."/>
            <person name="Suzuki M."/>
            <person name="Aoki J."/>
            <person name="Arakawa T."/>
            <person name="Iida J."/>
            <person name="Imamura K."/>
            <person name="Itoh M."/>
            <person name="Kato T."/>
            <person name="Kawaji H."/>
            <person name="Kawagashira N."/>
            <person name="Kawashima T."/>
            <person name="Kojima M."/>
            <person name="Kondo S."/>
            <person name="Konno H."/>
            <person name="Nakano K."/>
            <person name="Ninomiya N."/>
            <person name="Nishio T."/>
            <person name="Okada M."/>
            <person name="Plessy C."/>
            <person name="Shibata K."/>
            <person name="Shiraki T."/>
            <person name="Suzuki S."/>
            <person name="Tagami M."/>
            <person name="Waki K."/>
            <person name="Watahiki A."/>
            <person name="Okamura-Oho Y."/>
            <person name="Suzuki H."/>
            <person name="Kawai J."/>
            <person name="Hayashizaki Y."/>
        </authorList>
    </citation>
    <scope>NUCLEOTIDE SEQUENCE [LARGE SCALE MRNA]</scope>
    <source>
        <strain>C57BL/6J</strain>
        <tissue>Testis</tissue>
    </source>
</reference>
<reference key="2">
    <citation type="submission" date="2004-05" db="PDB data bank">
        <title>Solution structure of the ubiquitin-like domain from mouse hypothetical 1700011N24Rik protein.</title>
        <authorList>
            <consortium name="RIKEN structural genomics initiative (RSGI)"/>
        </authorList>
    </citation>
    <scope>STRUCTURE BY NMR OF 1-89</scope>
</reference>
<comment type="function">
    <text evidence="1 2">Probable aspartic protease (By similarity). Seems to act as a proteasomal shuttle which links the proteasome and replication fork proteins like RTF2. Required, with DDI2, for cellular survival following replication stress. Together or redudantly with DDI2, removes RTF2 from stalled forks to allow cell cycle progression after replication stress and maintains genome integrity (By similarity).</text>
</comment>
<comment type="similarity">
    <text evidence="5">Belongs to the DDI1 family.</text>
</comment>
<protein>
    <recommendedName>
        <fullName>Protein DDI1 homolog 1</fullName>
        <ecNumber evidence="1">3.4.23.-</ecNumber>
    </recommendedName>
</protein>
<sequence>MLITVYCVRRDLTEVTFSLQVNPDFELSNFRVLCELESGVPAEEAQIVYMEQLLTDDHCSLGSYGLKDGDMVVLLQKDNVGLRTPGRTPNHPRADFTGSGSAVPGTSSSRHPHQHQHHYHHHQRIPSTQQAHGLASGENMTFAQELDSPALIRSMLLSNPHDLSLLKERNPALAEALLSGNLETFSQVLMEQQRERTLREQEMFRLYSTNPFDQETQARIEEEIRQQNIEENMNIAMEEAPESFGQVAMLYINCKVNGHPLKAFVDSGAQMTIMSQACAERCNIMRLVDRRWGGVAKGVGTQRIMGRVHLAQIQIEGDFLQCSFSILEEQPMDILLGLDMLRRHQCSIDLKKNVLVIGTTGSQTHFLPEGELPLCAKLLSGTVQEESSDREVGGTIKHPVKGPGRKKH</sequence>
<accession>Q9DAF3</accession>
<evidence type="ECO:0000250" key="1">
    <source>
        <dbReference type="UniProtKB" id="I7HUG0"/>
    </source>
</evidence>
<evidence type="ECO:0000250" key="2">
    <source>
        <dbReference type="UniProtKB" id="Q8WTU0"/>
    </source>
</evidence>
<evidence type="ECO:0000255" key="3">
    <source>
        <dbReference type="PROSITE-ProRule" id="PRU00214"/>
    </source>
</evidence>
<evidence type="ECO:0000256" key="4">
    <source>
        <dbReference type="SAM" id="MobiDB-lite"/>
    </source>
</evidence>
<evidence type="ECO:0000305" key="5"/>
<evidence type="ECO:0007829" key="6">
    <source>
        <dbReference type="PDB" id="1V5O"/>
    </source>
</evidence>
<keyword id="KW-0002">3D-structure</keyword>
<keyword id="KW-0064">Aspartyl protease</keyword>
<keyword id="KW-0378">Hydrolase</keyword>
<keyword id="KW-0645">Protease</keyword>
<keyword id="KW-1185">Reference proteome</keyword>
<proteinExistence type="evidence at protein level"/>
<organism>
    <name type="scientific">Mus musculus</name>
    <name type="common">Mouse</name>
    <dbReference type="NCBI Taxonomy" id="10090"/>
    <lineage>
        <taxon>Eukaryota</taxon>
        <taxon>Metazoa</taxon>
        <taxon>Chordata</taxon>
        <taxon>Craniata</taxon>
        <taxon>Vertebrata</taxon>
        <taxon>Euteleostomi</taxon>
        <taxon>Mammalia</taxon>
        <taxon>Eutheria</taxon>
        <taxon>Euarchontoglires</taxon>
        <taxon>Glires</taxon>
        <taxon>Rodentia</taxon>
        <taxon>Myomorpha</taxon>
        <taxon>Muroidea</taxon>
        <taxon>Muridae</taxon>
        <taxon>Murinae</taxon>
        <taxon>Mus</taxon>
        <taxon>Mus</taxon>
    </lineage>
</organism>
<gene>
    <name type="primary">Ddi1</name>
</gene>